<name>MU150_SCHPO</name>
<reference key="1">
    <citation type="journal article" date="2002" name="Nature">
        <title>The genome sequence of Schizosaccharomyces pombe.</title>
        <authorList>
            <person name="Wood V."/>
            <person name="Gwilliam R."/>
            <person name="Rajandream M.A."/>
            <person name="Lyne M.H."/>
            <person name="Lyne R."/>
            <person name="Stewart A."/>
            <person name="Sgouros J.G."/>
            <person name="Peat N."/>
            <person name="Hayles J."/>
            <person name="Baker S.G."/>
            <person name="Basham D."/>
            <person name="Bowman S."/>
            <person name="Brooks K."/>
            <person name="Brown D."/>
            <person name="Brown S."/>
            <person name="Chillingworth T."/>
            <person name="Churcher C.M."/>
            <person name="Collins M."/>
            <person name="Connor R."/>
            <person name="Cronin A."/>
            <person name="Davis P."/>
            <person name="Feltwell T."/>
            <person name="Fraser A."/>
            <person name="Gentles S."/>
            <person name="Goble A."/>
            <person name="Hamlin N."/>
            <person name="Harris D.E."/>
            <person name="Hidalgo J."/>
            <person name="Hodgson G."/>
            <person name="Holroyd S."/>
            <person name="Hornsby T."/>
            <person name="Howarth S."/>
            <person name="Huckle E.J."/>
            <person name="Hunt S."/>
            <person name="Jagels K."/>
            <person name="James K.D."/>
            <person name="Jones L."/>
            <person name="Jones M."/>
            <person name="Leather S."/>
            <person name="McDonald S."/>
            <person name="McLean J."/>
            <person name="Mooney P."/>
            <person name="Moule S."/>
            <person name="Mungall K.L."/>
            <person name="Murphy L.D."/>
            <person name="Niblett D."/>
            <person name="Odell C."/>
            <person name="Oliver K."/>
            <person name="O'Neil S."/>
            <person name="Pearson D."/>
            <person name="Quail M.A."/>
            <person name="Rabbinowitsch E."/>
            <person name="Rutherford K.M."/>
            <person name="Rutter S."/>
            <person name="Saunders D."/>
            <person name="Seeger K."/>
            <person name="Sharp S."/>
            <person name="Skelton J."/>
            <person name="Simmonds M.N."/>
            <person name="Squares R."/>
            <person name="Squares S."/>
            <person name="Stevens K."/>
            <person name="Taylor K."/>
            <person name="Taylor R.G."/>
            <person name="Tivey A."/>
            <person name="Walsh S.V."/>
            <person name="Warren T."/>
            <person name="Whitehead S."/>
            <person name="Woodward J.R."/>
            <person name="Volckaert G."/>
            <person name="Aert R."/>
            <person name="Robben J."/>
            <person name="Grymonprez B."/>
            <person name="Weltjens I."/>
            <person name="Vanstreels E."/>
            <person name="Rieger M."/>
            <person name="Schaefer M."/>
            <person name="Mueller-Auer S."/>
            <person name="Gabel C."/>
            <person name="Fuchs M."/>
            <person name="Duesterhoeft A."/>
            <person name="Fritzc C."/>
            <person name="Holzer E."/>
            <person name="Moestl D."/>
            <person name="Hilbert H."/>
            <person name="Borzym K."/>
            <person name="Langer I."/>
            <person name="Beck A."/>
            <person name="Lehrach H."/>
            <person name="Reinhardt R."/>
            <person name="Pohl T.M."/>
            <person name="Eger P."/>
            <person name="Zimmermann W."/>
            <person name="Wedler H."/>
            <person name="Wambutt R."/>
            <person name="Purnelle B."/>
            <person name="Goffeau A."/>
            <person name="Cadieu E."/>
            <person name="Dreano S."/>
            <person name="Gloux S."/>
            <person name="Lelaure V."/>
            <person name="Mottier S."/>
            <person name="Galibert F."/>
            <person name="Aves S.J."/>
            <person name="Xiang Z."/>
            <person name="Hunt C."/>
            <person name="Moore K."/>
            <person name="Hurst S.M."/>
            <person name="Lucas M."/>
            <person name="Rochet M."/>
            <person name="Gaillardin C."/>
            <person name="Tallada V.A."/>
            <person name="Garzon A."/>
            <person name="Thode G."/>
            <person name="Daga R.R."/>
            <person name="Cruzado L."/>
            <person name="Jimenez J."/>
            <person name="Sanchez M."/>
            <person name="del Rey F."/>
            <person name="Benito J."/>
            <person name="Dominguez A."/>
            <person name="Revuelta J.L."/>
            <person name="Moreno S."/>
            <person name="Armstrong J."/>
            <person name="Forsburg S.L."/>
            <person name="Cerutti L."/>
            <person name="Lowe T."/>
            <person name="McCombie W.R."/>
            <person name="Paulsen I."/>
            <person name="Potashkin J."/>
            <person name="Shpakovski G.V."/>
            <person name="Ussery D."/>
            <person name="Barrell B.G."/>
            <person name="Nurse P."/>
        </authorList>
    </citation>
    <scope>NUCLEOTIDE SEQUENCE [LARGE SCALE GENOMIC DNA]</scope>
    <source>
        <strain>972 / ATCC 24843</strain>
    </source>
</reference>
<reference key="2">
    <citation type="journal article" date="2005" name="Curr. Biol.">
        <title>A large-scale screen in S. pombe identifies seven novel genes required for critical meiotic events.</title>
        <authorList>
            <person name="Martin-Castellanos C."/>
            <person name="Blanco M."/>
            <person name="Rozalen A.E."/>
            <person name="Perez-Hidalgo L."/>
            <person name="Garcia A.I."/>
            <person name="Conde F."/>
            <person name="Mata J."/>
            <person name="Ellermeier C."/>
            <person name="Davis L."/>
            <person name="San-Segundo P."/>
            <person name="Smith G.R."/>
            <person name="Moreno S."/>
        </authorList>
    </citation>
    <scope>FUNCTION IN MEIOSIS</scope>
</reference>
<reference key="3">
    <citation type="journal article" date="2006" name="Nat. Biotechnol.">
        <title>ORFeome cloning and global analysis of protein localization in the fission yeast Schizosaccharomyces pombe.</title>
        <authorList>
            <person name="Matsuyama A."/>
            <person name="Arai R."/>
            <person name="Yashiroda Y."/>
            <person name="Shirai A."/>
            <person name="Kamata A."/>
            <person name="Sekido S."/>
            <person name="Kobayashi Y."/>
            <person name="Hashimoto A."/>
            <person name="Hamamoto M."/>
            <person name="Hiraoka Y."/>
            <person name="Horinouchi S."/>
            <person name="Yoshida M."/>
        </authorList>
    </citation>
    <scope>SUBCELLULAR LOCATION [LARGE SCALE ANALYSIS]</scope>
</reference>
<organism>
    <name type="scientific">Schizosaccharomyces pombe (strain 972 / ATCC 24843)</name>
    <name type="common">Fission yeast</name>
    <dbReference type="NCBI Taxonomy" id="284812"/>
    <lineage>
        <taxon>Eukaryota</taxon>
        <taxon>Fungi</taxon>
        <taxon>Dikarya</taxon>
        <taxon>Ascomycota</taxon>
        <taxon>Taphrinomycotina</taxon>
        <taxon>Schizosaccharomycetes</taxon>
        <taxon>Schizosaccharomycetales</taxon>
        <taxon>Schizosaccharomycetaceae</taxon>
        <taxon>Schizosaccharomyces</taxon>
    </lineage>
</organism>
<proteinExistence type="evidence at protein level"/>
<dbReference type="EMBL" id="CU329672">
    <property type="protein sequence ID" value="CAA22860.1"/>
    <property type="molecule type" value="Genomic_DNA"/>
</dbReference>
<dbReference type="PIR" id="T40938">
    <property type="entry name" value="T40938"/>
</dbReference>
<dbReference type="RefSeq" id="NP_588135.1">
    <property type="nucleotide sequence ID" value="NM_001023125.2"/>
</dbReference>
<dbReference type="BioGRID" id="275815">
    <property type="interactions" value="8"/>
</dbReference>
<dbReference type="PaxDb" id="4896-SPCC1322.07c.1"/>
<dbReference type="EnsemblFungi" id="SPCC1322.07c.1">
    <property type="protein sequence ID" value="SPCC1322.07c.1:pep"/>
    <property type="gene ID" value="SPCC1322.07c"/>
</dbReference>
<dbReference type="GeneID" id="2539245"/>
<dbReference type="KEGG" id="spo:2539245"/>
<dbReference type="PomBase" id="SPCC1322.07c">
    <property type="gene designation" value="mug150"/>
</dbReference>
<dbReference type="VEuPathDB" id="FungiDB:SPCC1322.07c"/>
<dbReference type="HOGENOM" id="CLU_2251627_0_0_1"/>
<dbReference type="InParanoid" id="O94546"/>
<dbReference type="PRO" id="PR:O94546"/>
<dbReference type="Proteomes" id="UP000002485">
    <property type="component" value="Chromosome III"/>
</dbReference>
<dbReference type="GO" id="GO:0005783">
    <property type="term" value="C:endoplasmic reticulum"/>
    <property type="evidence" value="ECO:0007005"/>
    <property type="project" value="PomBase"/>
</dbReference>
<dbReference type="GO" id="GO:0005789">
    <property type="term" value="C:endoplasmic reticulum membrane"/>
    <property type="evidence" value="ECO:0007669"/>
    <property type="project" value="UniProtKB-SubCell"/>
</dbReference>
<dbReference type="GO" id="GO:0051321">
    <property type="term" value="P:meiotic cell cycle"/>
    <property type="evidence" value="ECO:0007669"/>
    <property type="project" value="UniProtKB-KW"/>
</dbReference>
<evidence type="ECO:0000255" key="1"/>
<evidence type="ECO:0000269" key="2">
    <source>
    </source>
</evidence>
<evidence type="ECO:0000269" key="3">
    <source>
    </source>
</evidence>
<gene>
    <name type="primary">mug150</name>
    <name type="ORF">SPCC1322.07c</name>
</gene>
<sequence>MASLFIIMDKRFAVFASSDKPNNCSRKNMFFLKNIIVLSNYLYLLYKAWIVCTTISLCCDFPLFNFLFIAIPYFTEILYNDSSLLWFLFVSLCFITLSFQSLEI</sequence>
<accession>O94546</accession>
<comment type="function">
    <text evidence="2">Has a role in meiosis.</text>
</comment>
<comment type="subcellular location">
    <subcellularLocation>
        <location evidence="3">Endoplasmic reticulum membrane</location>
        <topology evidence="3">Multi-pass membrane protein</topology>
    </subcellularLocation>
</comment>
<protein>
    <recommendedName>
        <fullName>Meiotically up-regulated gene 150 protein</fullName>
    </recommendedName>
</protein>
<feature type="chain" id="PRO_0000278508" description="Meiotically up-regulated gene 150 protein">
    <location>
        <begin position="1"/>
        <end position="104"/>
    </location>
</feature>
<feature type="transmembrane region" description="Helical" evidence="1">
    <location>
        <begin position="30"/>
        <end position="50"/>
    </location>
</feature>
<feature type="transmembrane region" description="Helical" evidence="1">
    <location>
        <begin position="54"/>
        <end position="74"/>
    </location>
</feature>
<feature type="transmembrane region" description="Helical" evidence="1">
    <location>
        <begin position="84"/>
        <end position="104"/>
    </location>
</feature>
<keyword id="KW-0256">Endoplasmic reticulum</keyword>
<keyword id="KW-0469">Meiosis</keyword>
<keyword id="KW-0472">Membrane</keyword>
<keyword id="KW-1185">Reference proteome</keyword>
<keyword id="KW-0812">Transmembrane</keyword>
<keyword id="KW-1133">Transmembrane helix</keyword>